<accession>Q7N9P2</accession>
<protein>
    <recommendedName>
        <fullName evidence="1">Guanylate kinase</fullName>
        <ecNumber evidence="1">2.7.4.8</ecNumber>
    </recommendedName>
    <alternativeName>
        <fullName evidence="1">GMP kinase</fullName>
    </alternativeName>
</protein>
<sequence>MIQGTLYIVSAPSGAGKSSLIQALLKTQPLYDTQVSVSHTTRAMRPGENQGEHYFFITEEAFRQMIDNNEFLEHARVFDNYYGTSRKVIEETLASGVDVFLDIDWQGAQQIRKKMPSARSIFILPPSKEELCRRLRGRGQDSEDIIEKRMDQAVAEMVHYNEYDYLIVNDDFNTALADLHTIIRSERLHRERQAQRHDALISKLLAD</sequence>
<evidence type="ECO:0000255" key="1">
    <source>
        <dbReference type="HAMAP-Rule" id="MF_00328"/>
    </source>
</evidence>
<reference key="1">
    <citation type="journal article" date="2003" name="Nat. Biotechnol.">
        <title>The genome sequence of the entomopathogenic bacterium Photorhabdus luminescens.</title>
        <authorList>
            <person name="Duchaud E."/>
            <person name="Rusniok C."/>
            <person name="Frangeul L."/>
            <person name="Buchrieser C."/>
            <person name="Givaudan A."/>
            <person name="Taourit S."/>
            <person name="Bocs S."/>
            <person name="Boursaux-Eude C."/>
            <person name="Chandler M."/>
            <person name="Charles J.-F."/>
            <person name="Dassa E."/>
            <person name="Derose R."/>
            <person name="Derzelle S."/>
            <person name="Freyssinet G."/>
            <person name="Gaudriault S."/>
            <person name="Medigue C."/>
            <person name="Lanois A."/>
            <person name="Powell K."/>
            <person name="Siguier P."/>
            <person name="Vincent R."/>
            <person name="Wingate V."/>
            <person name="Zouine M."/>
            <person name="Glaser P."/>
            <person name="Boemare N."/>
            <person name="Danchin A."/>
            <person name="Kunst F."/>
        </authorList>
    </citation>
    <scope>NUCLEOTIDE SEQUENCE [LARGE SCALE GENOMIC DNA]</scope>
    <source>
        <strain>DSM 15139 / CIP 105565 / TT01</strain>
    </source>
</reference>
<name>KGUA_PHOLL</name>
<proteinExistence type="inferred from homology"/>
<organism>
    <name type="scientific">Photorhabdus laumondii subsp. laumondii (strain DSM 15139 / CIP 105565 / TT01)</name>
    <name type="common">Photorhabdus luminescens subsp. laumondii</name>
    <dbReference type="NCBI Taxonomy" id="243265"/>
    <lineage>
        <taxon>Bacteria</taxon>
        <taxon>Pseudomonadati</taxon>
        <taxon>Pseudomonadota</taxon>
        <taxon>Gammaproteobacteria</taxon>
        <taxon>Enterobacterales</taxon>
        <taxon>Morganellaceae</taxon>
        <taxon>Photorhabdus</taxon>
    </lineage>
</organism>
<dbReference type="EC" id="2.7.4.8" evidence="1"/>
<dbReference type="EMBL" id="BX571859">
    <property type="protein sequence ID" value="CAE12569.1"/>
    <property type="molecule type" value="Genomic_DNA"/>
</dbReference>
<dbReference type="RefSeq" id="WP_011144673.1">
    <property type="nucleotide sequence ID" value="NC_005126.1"/>
</dbReference>
<dbReference type="SMR" id="Q7N9P2"/>
<dbReference type="STRING" id="243265.plu0274"/>
<dbReference type="GeneID" id="48846568"/>
<dbReference type="KEGG" id="plu:plu0274"/>
<dbReference type="eggNOG" id="COG0194">
    <property type="taxonomic scope" value="Bacteria"/>
</dbReference>
<dbReference type="HOGENOM" id="CLU_001715_1_0_6"/>
<dbReference type="OrthoDB" id="9808150at2"/>
<dbReference type="Proteomes" id="UP000002514">
    <property type="component" value="Chromosome"/>
</dbReference>
<dbReference type="GO" id="GO:0005829">
    <property type="term" value="C:cytosol"/>
    <property type="evidence" value="ECO:0007669"/>
    <property type="project" value="TreeGrafter"/>
</dbReference>
<dbReference type="GO" id="GO:0005524">
    <property type="term" value="F:ATP binding"/>
    <property type="evidence" value="ECO:0007669"/>
    <property type="project" value="UniProtKB-UniRule"/>
</dbReference>
<dbReference type="GO" id="GO:0004385">
    <property type="term" value="F:guanylate kinase activity"/>
    <property type="evidence" value="ECO:0007669"/>
    <property type="project" value="UniProtKB-UniRule"/>
</dbReference>
<dbReference type="CDD" id="cd00071">
    <property type="entry name" value="GMPK"/>
    <property type="match status" value="1"/>
</dbReference>
<dbReference type="FunFam" id="3.40.50.300:FF:000855">
    <property type="entry name" value="Guanylate kinase"/>
    <property type="match status" value="1"/>
</dbReference>
<dbReference type="FunFam" id="3.30.63.10:FF:000002">
    <property type="entry name" value="Guanylate kinase 1"/>
    <property type="match status" value="1"/>
</dbReference>
<dbReference type="Gene3D" id="3.30.63.10">
    <property type="entry name" value="Guanylate Kinase phosphate binding domain"/>
    <property type="match status" value="1"/>
</dbReference>
<dbReference type="Gene3D" id="3.40.50.300">
    <property type="entry name" value="P-loop containing nucleotide triphosphate hydrolases"/>
    <property type="match status" value="1"/>
</dbReference>
<dbReference type="HAMAP" id="MF_00328">
    <property type="entry name" value="Guanylate_kinase"/>
    <property type="match status" value="1"/>
</dbReference>
<dbReference type="InterPro" id="IPR008145">
    <property type="entry name" value="GK/Ca_channel_bsu"/>
</dbReference>
<dbReference type="InterPro" id="IPR008144">
    <property type="entry name" value="Guanylate_kin-like_dom"/>
</dbReference>
<dbReference type="InterPro" id="IPR017665">
    <property type="entry name" value="Guanylate_kinase"/>
</dbReference>
<dbReference type="InterPro" id="IPR020590">
    <property type="entry name" value="Guanylate_kinase_CS"/>
</dbReference>
<dbReference type="InterPro" id="IPR027417">
    <property type="entry name" value="P-loop_NTPase"/>
</dbReference>
<dbReference type="NCBIfam" id="TIGR03263">
    <property type="entry name" value="guanyl_kin"/>
    <property type="match status" value="1"/>
</dbReference>
<dbReference type="PANTHER" id="PTHR23117:SF13">
    <property type="entry name" value="GUANYLATE KINASE"/>
    <property type="match status" value="1"/>
</dbReference>
<dbReference type="PANTHER" id="PTHR23117">
    <property type="entry name" value="GUANYLATE KINASE-RELATED"/>
    <property type="match status" value="1"/>
</dbReference>
<dbReference type="Pfam" id="PF00625">
    <property type="entry name" value="Guanylate_kin"/>
    <property type="match status" value="1"/>
</dbReference>
<dbReference type="SMART" id="SM00072">
    <property type="entry name" value="GuKc"/>
    <property type="match status" value="1"/>
</dbReference>
<dbReference type="SUPFAM" id="SSF52540">
    <property type="entry name" value="P-loop containing nucleoside triphosphate hydrolases"/>
    <property type="match status" value="1"/>
</dbReference>
<dbReference type="PROSITE" id="PS00856">
    <property type="entry name" value="GUANYLATE_KINASE_1"/>
    <property type="match status" value="1"/>
</dbReference>
<dbReference type="PROSITE" id="PS50052">
    <property type="entry name" value="GUANYLATE_KINASE_2"/>
    <property type="match status" value="1"/>
</dbReference>
<comment type="function">
    <text evidence="1">Essential for recycling GMP and indirectly, cGMP.</text>
</comment>
<comment type="catalytic activity">
    <reaction evidence="1">
        <text>GMP + ATP = GDP + ADP</text>
        <dbReference type="Rhea" id="RHEA:20780"/>
        <dbReference type="ChEBI" id="CHEBI:30616"/>
        <dbReference type="ChEBI" id="CHEBI:58115"/>
        <dbReference type="ChEBI" id="CHEBI:58189"/>
        <dbReference type="ChEBI" id="CHEBI:456216"/>
        <dbReference type="EC" id="2.7.4.8"/>
    </reaction>
</comment>
<comment type="subcellular location">
    <subcellularLocation>
        <location evidence="1">Cytoplasm</location>
    </subcellularLocation>
</comment>
<comment type="similarity">
    <text evidence="1">Belongs to the guanylate kinase family.</text>
</comment>
<feature type="chain" id="PRO_0000170580" description="Guanylate kinase">
    <location>
        <begin position="1"/>
        <end position="207"/>
    </location>
</feature>
<feature type="domain" description="Guanylate kinase-like" evidence="1">
    <location>
        <begin position="4"/>
        <end position="184"/>
    </location>
</feature>
<feature type="binding site" evidence="1">
    <location>
        <begin position="11"/>
        <end position="18"/>
    </location>
    <ligand>
        <name>ATP</name>
        <dbReference type="ChEBI" id="CHEBI:30616"/>
    </ligand>
</feature>
<gene>
    <name evidence="1" type="primary">gmk</name>
    <name type="ordered locus">plu0274</name>
</gene>
<keyword id="KW-0067">ATP-binding</keyword>
<keyword id="KW-0963">Cytoplasm</keyword>
<keyword id="KW-0418">Kinase</keyword>
<keyword id="KW-0547">Nucleotide-binding</keyword>
<keyword id="KW-1185">Reference proteome</keyword>
<keyword id="KW-0808">Transferase</keyword>